<accession>Q214R5</accession>
<proteinExistence type="inferred from homology"/>
<sequence>MVDLRIPAALKLGPKLKRSFFARSVHEVAPDLIGATLLVEGSGGVIVEVEAYHHTDPAAHSFGGQTPRNAVMFGPPGVAYVYRSYGIHWCLNVVCEEAGSASAVLIRALVPTDGLALMRRRRGVEDERALCSGPGKLAQALGVTIAHNGLKLDAPPFALHGRLAAPEIVAGPRIGISKAAELPWRYGLRGSKFVSKPFAE</sequence>
<reference key="1">
    <citation type="submission" date="2006-03" db="EMBL/GenBank/DDBJ databases">
        <title>Complete sequence of Rhodopseudomonas palustris BisB18.</title>
        <authorList>
            <consortium name="US DOE Joint Genome Institute"/>
            <person name="Copeland A."/>
            <person name="Lucas S."/>
            <person name="Lapidus A."/>
            <person name="Barry K."/>
            <person name="Detter J.C."/>
            <person name="Glavina del Rio T."/>
            <person name="Hammon N."/>
            <person name="Israni S."/>
            <person name="Dalin E."/>
            <person name="Tice H."/>
            <person name="Pitluck S."/>
            <person name="Chain P."/>
            <person name="Malfatti S."/>
            <person name="Shin M."/>
            <person name="Vergez L."/>
            <person name="Schmutz J."/>
            <person name="Larimer F."/>
            <person name="Land M."/>
            <person name="Hauser L."/>
            <person name="Pelletier D.A."/>
            <person name="Kyrpides N."/>
            <person name="Anderson I."/>
            <person name="Oda Y."/>
            <person name="Harwood C.S."/>
            <person name="Richardson P."/>
        </authorList>
    </citation>
    <scope>NUCLEOTIDE SEQUENCE [LARGE SCALE GENOMIC DNA]</scope>
    <source>
        <strain>BisB18</strain>
    </source>
</reference>
<feature type="chain" id="PRO_0000265051" description="Putative 3-methyladenine DNA glycosylase">
    <location>
        <begin position="1"/>
        <end position="200"/>
    </location>
</feature>
<name>3MGH_RHOPB</name>
<organism>
    <name type="scientific">Rhodopseudomonas palustris (strain BisB18)</name>
    <dbReference type="NCBI Taxonomy" id="316056"/>
    <lineage>
        <taxon>Bacteria</taxon>
        <taxon>Pseudomonadati</taxon>
        <taxon>Pseudomonadota</taxon>
        <taxon>Alphaproteobacteria</taxon>
        <taxon>Hyphomicrobiales</taxon>
        <taxon>Nitrobacteraceae</taxon>
        <taxon>Rhodopseudomonas</taxon>
    </lineage>
</organism>
<protein>
    <recommendedName>
        <fullName evidence="1">Putative 3-methyladenine DNA glycosylase</fullName>
        <ecNumber evidence="1">3.2.2.-</ecNumber>
    </recommendedName>
</protein>
<keyword id="KW-0227">DNA damage</keyword>
<keyword id="KW-0234">DNA repair</keyword>
<keyword id="KW-0378">Hydrolase</keyword>
<dbReference type="EC" id="3.2.2.-" evidence="1"/>
<dbReference type="EMBL" id="CP000301">
    <property type="protein sequence ID" value="ABD88121.1"/>
    <property type="status" value="ALT_INIT"/>
    <property type="molecule type" value="Genomic_DNA"/>
</dbReference>
<dbReference type="SMR" id="Q214R5"/>
<dbReference type="STRING" id="316056.RPC_2571"/>
<dbReference type="KEGG" id="rpc:RPC_2571"/>
<dbReference type="eggNOG" id="COG2094">
    <property type="taxonomic scope" value="Bacteria"/>
</dbReference>
<dbReference type="HOGENOM" id="CLU_060471_3_0_5"/>
<dbReference type="OrthoDB" id="9794313at2"/>
<dbReference type="GO" id="GO:0003905">
    <property type="term" value="F:alkylbase DNA N-glycosylase activity"/>
    <property type="evidence" value="ECO:0007669"/>
    <property type="project" value="InterPro"/>
</dbReference>
<dbReference type="GO" id="GO:0003677">
    <property type="term" value="F:DNA binding"/>
    <property type="evidence" value="ECO:0007669"/>
    <property type="project" value="InterPro"/>
</dbReference>
<dbReference type="GO" id="GO:0006284">
    <property type="term" value="P:base-excision repair"/>
    <property type="evidence" value="ECO:0007669"/>
    <property type="project" value="InterPro"/>
</dbReference>
<dbReference type="CDD" id="cd00540">
    <property type="entry name" value="AAG"/>
    <property type="match status" value="1"/>
</dbReference>
<dbReference type="FunFam" id="3.10.300.10:FF:000001">
    <property type="entry name" value="Putative 3-methyladenine DNA glycosylase"/>
    <property type="match status" value="1"/>
</dbReference>
<dbReference type="Gene3D" id="3.10.300.10">
    <property type="entry name" value="Methylpurine-DNA glycosylase (MPG)"/>
    <property type="match status" value="1"/>
</dbReference>
<dbReference type="HAMAP" id="MF_00527">
    <property type="entry name" value="3MGH"/>
    <property type="match status" value="1"/>
</dbReference>
<dbReference type="InterPro" id="IPR011034">
    <property type="entry name" value="Formyl_transferase-like_C_sf"/>
</dbReference>
<dbReference type="InterPro" id="IPR003180">
    <property type="entry name" value="MPG"/>
</dbReference>
<dbReference type="InterPro" id="IPR036995">
    <property type="entry name" value="MPG_sf"/>
</dbReference>
<dbReference type="NCBIfam" id="TIGR00567">
    <property type="entry name" value="3mg"/>
    <property type="match status" value="1"/>
</dbReference>
<dbReference type="NCBIfam" id="NF002003">
    <property type="entry name" value="PRK00802.1-3"/>
    <property type="match status" value="1"/>
</dbReference>
<dbReference type="PANTHER" id="PTHR10429">
    <property type="entry name" value="DNA-3-METHYLADENINE GLYCOSYLASE"/>
    <property type="match status" value="1"/>
</dbReference>
<dbReference type="PANTHER" id="PTHR10429:SF0">
    <property type="entry name" value="DNA-3-METHYLADENINE GLYCOSYLASE"/>
    <property type="match status" value="1"/>
</dbReference>
<dbReference type="Pfam" id="PF02245">
    <property type="entry name" value="Pur_DNA_glyco"/>
    <property type="match status" value="1"/>
</dbReference>
<dbReference type="SUPFAM" id="SSF50486">
    <property type="entry name" value="FMT C-terminal domain-like"/>
    <property type="match status" value="1"/>
</dbReference>
<gene>
    <name type="ordered locus">RPC_2571</name>
</gene>
<comment type="similarity">
    <text evidence="1">Belongs to the DNA glycosylase MPG family.</text>
</comment>
<comment type="sequence caution" evidence="2">
    <conflict type="erroneous initiation">
        <sequence resource="EMBL-CDS" id="ABD88121"/>
    </conflict>
</comment>
<evidence type="ECO:0000255" key="1">
    <source>
        <dbReference type="HAMAP-Rule" id="MF_00527"/>
    </source>
</evidence>
<evidence type="ECO:0000305" key="2"/>